<comment type="function">
    <text evidence="1">Catalyzes the attachment of valine to tRNA(Val). As ValRS can inadvertently accommodate and process structurally similar amino acids such as threonine, to avoid such errors, it has a 'posttransfer' editing activity that hydrolyzes mischarged Thr-tRNA(Val) in a tRNA-dependent manner.</text>
</comment>
<comment type="catalytic activity">
    <reaction evidence="1">
        <text>tRNA(Val) + L-valine + ATP = L-valyl-tRNA(Val) + AMP + diphosphate</text>
        <dbReference type="Rhea" id="RHEA:10704"/>
        <dbReference type="Rhea" id="RHEA-COMP:9672"/>
        <dbReference type="Rhea" id="RHEA-COMP:9708"/>
        <dbReference type="ChEBI" id="CHEBI:30616"/>
        <dbReference type="ChEBI" id="CHEBI:33019"/>
        <dbReference type="ChEBI" id="CHEBI:57762"/>
        <dbReference type="ChEBI" id="CHEBI:78442"/>
        <dbReference type="ChEBI" id="CHEBI:78537"/>
        <dbReference type="ChEBI" id="CHEBI:456215"/>
        <dbReference type="EC" id="6.1.1.9"/>
    </reaction>
</comment>
<comment type="subunit">
    <text evidence="1">Monomer.</text>
</comment>
<comment type="subcellular location">
    <subcellularLocation>
        <location evidence="1">Cytoplasm</location>
    </subcellularLocation>
</comment>
<comment type="domain">
    <text evidence="1">ValRS has two distinct active sites: one for aminoacylation and one for editing. The misactivated threonine is translocated from the active site to the editing site.</text>
</comment>
<comment type="domain">
    <text evidence="1">The C-terminal coiled-coil domain is crucial for aminoacylation activity.</text>
</comment>
<comment type="similarity">
    <text evidence="1">Belongs to the class-I aminoacyl-tRNA synthetase family. ValS type 1 subfamily.</text>
</comment>
<keyword id="KW-0030">Aminoacyl-tRNA synthetase</keyword>
<keyword id="KW-0067">ATP-binding</keyword>
<keyword id="KW-0175">Coiled coil</keyword>
<keyword id="KW-0963">Cytoplasm</keyword>
<keyword id="KW-0436">Ligase</keyword>
<keyword id="KW-0547">Nucleotide-binding</keyword>
<keyword id="KW-0648">Protein biosynthesis</keyword>
<name>SYV_BARQU</name>
<accession>Q6FZB1</accession>
<organism>
    <name type="scientific">Bartonella quintana (strain Toulouse)</name>
    <name type="common">Rochalimaea quintana</name>
    <dbReference type="NCBI Taxonomy" id="283165"/>
    <lineage>
        <taxon>Bacteria</taxon>
        <taxon>Pseudomonadati</taxon>
        <taxon>Pseudomonadota</taxon>
        <taxon>Alphaproteobacteria</taxon>
        <taxon>Hyphomicrobiales</taxon>
        <taxon>Bartonellaceae</taxon>
        <taxon>Bartonella</taxon>
    </lineage>
</organism>
<dbReference type="EC" id="6.1.1.9" evidence="1"/>
<dbReference type="EMBL" id="BX897700">
    <property type="protein sequence ID" value="CAF26318.1"/>
    <property type="molecule type" value="Genomic_DNA"/>
</dbReference>
<dbReference type="RefSeq" id="WP_011179562.1">
    <property type="nucleotide sequence ID" value="NC_005955.1"/>
</dbReference>
<dbReference type="SMR" id="Q6FZB1"/>
<dbReference type="KEGG" id="bqu:BQ08350"/>
<dbReference type="eggNOG" id="COG0525">
    <property type="taxonomic scope" value="Bacteria"/>
</dbReference>
<dbReference type="HOGENOM" id="CLU_001493_0_2_5"/>
<dbReference type="OrthoDB" id="9810365at2"/>
<dbReference type="Proteomes" id="UP000000597">
    <property type="component" value="Chromosome"/>
</dbReference>
<dbReference type="GO" id="GO:0005829">
    <property type="term" value="C:cytosol"/>
    <property type="evidence" value="ECO:0007669"/>
    <property type="project" value="TreeGrafter"/>
</dbReference>
<dbReference type="GO" id="GO:0002161">
    <property type="term" value="F:aminoacyl-tRNA deacylase activity"/>
    <property type="evidence" value="ECO:0007669"/>
    <property type="project" value="InterPro"/>
</dbReference>
<dbReference type="GO" id="GO:0005524">
    <property type="term" value="F:ATP binding"/>
    <property type="evidence" value="ECO:0007669"/>
    <property type="project" value="UniProtKB-UniRule"/>
</dbReference>
<dbReference type="GO" id="GO:0004832">
    <property type="term" value="F:valine-tRNA ligase activity"/>
    <property type="evidence" value="ECO:0007669"/>
    <property type="project" value="UniProtKB-UniRule"/>
</dbReference>
<dbReference type="GO" id="GO:0006438">
    <property type="term" value="P:valyl-tRNA aminoacylation"/>
    <property type="evidence" value="ECO:0007669"/>
    <property type="project" value="UniProtKB-UniRule"/>
</dbReference>
<dbReference type="CDD" id="cd07962">
    <property type="entry name" value="Anticodon_Ia_Val"/>
    <property type="match status" value="1"/>
</dbReference>
<dbReference type="CDD" id="cd00817">
    <property type="entry name" value="ValRS_core"/>
    <property type="match status" value="1"/>
</dbReference>
<dbReference type="FunFam" id="1.10.287.380:FF:000001">
    <property type="entry name" value="Valine--tRNA ligase"/>
    <property type="match status" value="1"/>
</dbReference>
<dbReference type="FunFam" id="3.40.50.620:FF:000032">
    <property type="entry name" value="Valine--tRNA ligase"/>
    <property type="match status" value="1"/>
</dbReference>
<dbReference type="FunFam" id="3.40.50.620:FF:000078">
    <property type="entry name" value="Valine--tRNA ligase, mitochondrial"/>
    <property type="match status" value="1"/>
</dbReference>
<dbReference type="Gene3D" id="3.40.50.620">
    <property type="entry name" value="HUPs"/>
    <property type="match status" value="2"/>
</dbReference>
<dbReference type="Gene3D" id="1.10.730.10">
    <property type="entry name" value="Isoleucyl-tRNA Synthetase, Domain 1"/>
    <property type="match status" value="1"/>
</dbReference>
<dbReference type="Gene3D" id="1.10.287.380">
    <property type="entry name" value="Valyl-tRNA synthetase, C-terminal domain"/>
    <property type="match status" value="1"/>
</dbReference>
<dbReference type="Gene3D" id="3.90.740.10">
    <property type="entry name" value="Valyl/Leucyl/Isoleucyl-tRNA synthetase, editing domain"/>
    <property type="match status" value="2"/>
</dbReference>
<dbReference type="HAMAP" id="MF_02004">
    <property type="entry name" value="Val_tRNA_synth_type1"/>
    <property type="match status" value="1"/>
</dbReference>
<dbReference type="InterPro" id="IPR001412">
    <property type="entry name" value="aa-tRNA-synth_I_CS"/>
</dbReference>
<dbReference type="InterPro" id="IPR002300">
    <property type="entry name" value="aa-tRNA-synth_Ia"/>
</dbReference>
<dbReference type="InterPro" id="IPR033705">
    <property type="entry name" value="Anticodon_Ia_Val"/>
</dbReference>
<dbReference type="InterPro" id="IPR013155">
    <property type="entry name" value="M/V/L/I-tRNA-synth_anticd-bd"/>
</dbReference>
<dbReference type="InterPro" id="IPR014729">
    <property type="entry name" value="Rossmann-like_a/b/a_fold"/>
</dbReference>
<dbReference type="InterPro" id="IPR010978">
    <property type="entry name" value="tRNA-bd_arm"/>
</dbReference>
<dbReference type="InterPro" id="IPR009080">
    <property type="entry name" value="tRNAsynth_Ia_anticodon-bd"/>
</dbReference>
<dbReference type="InterPro" id="IPR037118">
    <property type="entry name" value="Val-tRNA_synth_C_sf"/>
</dbReference>
<dbReference type="InterPro" id="IPR019499">
    <property type="entry name" value="Val-tRNA_synth_tRNA-bd"/>
</dbReference>
<dbReference type="InterPro" id="IPR009008">
    <property type="entry name" value="Val/Leu/Ile-tRNA-synth_edit"/>
</dbReference>
<dbReference type="InterPro" id="IPR002303">
    <property type="entry name" value="Valyl-tRNA_ligase"/>
</dbReference>
<dbReference type="NCBIfam" id="NF004349">
    <property type="entry name" value="PRK05729.1"/>
    <property type="match status" value="1"/>
</dbReference>
<dbReference type="NCBIfam" id="TIGR00422">
    <property type="entry name" value="valS"/>
    <property type="match status" value="1"/>
</dbReference>
<dbReference type="PANTHER" id="PTHR11946:SF93">
    <property type="entry name" value="VALINE--TRNA LIGASE, CHLOROPLASTIC_MITOCHONDRIAL 2"/>
    <property type="match status" value="1"/>
</dbReference>
<dbReference type="PANTHER" id="PTHR11946">
    <property type="entry name" value="VALYL-TRNA SYNTHETASES"/>
    <property type="match status" value="1"/>
</dbReference>
<dbReference type="Pfam" id="PF08264">
    <property type="entry name" value="Anticodon_1"/>
    <property type="match status" value="1"/>
</dbReference>
<dbReference type="Pfam" id="PF00133">
    <property type="entry name" value="tRNA-synt_1"/>
    <property type="match status" value="1"/>
</dbReference>
<dbReference type="Pfam" id="PF10458">
    <property type="entry name" value="Val_tRNA-synt_C"/>
    <property type="match status" value="1"/>
</dbReference>
<dbReference type="PRINTS" id="PR00986">
    <property type="entry name" value="TRNASYNTHVAL"/>
</dbReference>
<dbReference type="SUPFAM" id="SSF47323">
    <property type="entry name" value="Anticodon-binding domain of a subclass of class I aminoacyl-tRNA synthetases"/>
    <property type="match status" value="1"/>
</dbReference>
<dbReference type="SUPFAM" id="SSF52374">
    <property type="entry name" value="Nucleotidylyl transferase"/>
    <property type="match status" value="1"/>
</dbReference>
<dbReference type="SUPFAM" id="SSF46589">
    <property type="entry name" value="tRNA-binding arm"/>
    <property type="match status" value="1"/>
</dbReference>
<dbReference type="SUPFAM" id="SSF50677">
    <property type="entry name" value="ValRS/IleRS/LeuRS editing domain"/>
    <property type="match status" value="1"/>
</dbReference>
<dbReference type="PROSITE" id="PS00178">
    <property type="entry name" value="AA_TRNA_LIGASE_I"/>
    <property type="match status" value="1"/>
</dbReference>
<sequence>MLEKNYDAASIEQKIAKRWEARGAFKAGMGAKSGTEPFCVMLPPPNVTGSLHMGHALNTTIQDIVVRFERMRGKNVLWQPGMDHAGIATQTVVERQLAECQEPTRQEMGRERFVERIWEWRHETGGVIANQLRRLGVSCDWSRERFTMDEGLSHAVREVFVTLYKQGLIYKDKRLVNWDPKLLTAISDLEVEQREIKGHLWHFRYPLEGKVFDPGDPTTFITVATTRPETMLGDTGIAVNPEDDRYKNLIGQSALLPLVGRRLLIVADGYADPSEGSGAVKITPAHDFNDFEVGKRNNLRLINVFTQKAEIFLHKNEAFFDGLTLSDELKKLVENLDQADRFIARHQIVSLMEEGGYLAAVDDHPHTVPHGDRSGVPIEPFLTDQWYVCAEQLAKPAVEAVRQGRTQFVPDSWKKTYFNWMENIQPWCISRQLWWGHQIPAWYGPDGMVFVEKSEEEALAAAFSHYGEEVELTRDQDVLDTWFSSALWPFSTLGWPNKTTELDTFYPTSLSVTGFDIIFFWVARMMMMGLHFMGEVPFPTVYVHALVRDQKGAKMSKSKGNIIDPLELIDQYSADSLRFTLAVMAAQGRDVKLDPSRIAGYRNFATKLWNATRFAKINGVKHNPAFKPEKVKLALNRWILTELSKTVSAVTTGIENYKFNESADALYRFIWNTLCDWYLELLKPVFQSFNEEAKNEAQACTAWVLDEVYKLLHPFMPHMTEELWCLTETPNMQRKDMLALAQWPEITFLDEAAAADINWLIDVITEIRSVRFEMNIPAGKLAPLVIVEAGEITRERIQRYGALLKKLARIETIDFSDRVLAVSAQMVLGEAIFCLPLGQLIDLEAERARLVKNVSKIEQDIEKISVKLNNPKFVENAKPEIVEAERNKILELRVAQKKISIALERLV</sequence>
<feature type="chain" id="PRO_0000224441" description="Valine--tRNA ligase">
    <location>
        <begin position="1"/>
        <end position="907"/>
    </location>
</feature>
<feature type="coiled-coil region" evidence="1">
    <location>
        <begin position="838"/>
        <end position="870"/>
    </location>
</feature>
<feature type="short sequence motif" description="'HIGH' region">
    <location>
        <begin position="45"/>
        <end position="55"/>
    </location>
</feature>
<feature type="short sequence motif" description="'KMSKS' region">
    <location>
        <begin position="554"/>
        <end position="558"/>
    </location>
</feature>
<feature type="binding site" evidence="1">
    <location>
        <position position="557"/>
    </location>
    <ligand>
        <name>ATP</name>
        <dbReference type="ChEBI" id="CHEBI:30616"/>
    </ligand>
</feature>
<reference key="1">
    <citation type="journal article" date="2004" name="Proc. Natl. Acad. Sci. U.S.A.">
        <title>The louse-borne human pathogen Bartonella quintana is a genomic derivative of the zoonotic agent Bartonella henselae.</title>
        <authorList>
            <person name="Alsmark U.C.M."/>
            <person name="Frank A.C."/>
            <person name="Karlberg E.O."/>
            <person name="Legault B.-A."/>
            <person name="Ardell D.H."/>
            <person name="Canbaeck B."/>
            <person name="Eriksson A.-S."/>
            <person name="Naeslund A.K."/>
            <person name="Handley S.A."/>
            <person name="Huvet M."/>
            <person name="La Scola B."/>
            <person name="Holmberg M."/>
            <person name="Andersson S.G.E."/>
        </authorList>
    </citation>
    <scope>NUCLEOTIDE SEQUENCE [LARGE SCALE GENOMIC DNA]</scope>
    <source>
        <strain>Toulouse</strain>
    </source>
</reference>
<proteinExistence type="inferred from homology"/>
<protein>
    <recommendedName>
        <fullName evidence="1">Valine--tRNA ligase</fullName>
        <ecNumber evidence="1">6.1.1.9</ecNumber>
    </recommendedName>
    <alternativeName>
        <fullName evidence="1">Valyl-tRNA synthetase</fullName>
        <shortName evidence="1">ValRS</shortName>
    </alternativeName>
</protein>
<gene>
    <name evidence="1" type="primary">valS</name>
    <name type="ordered locus">BQ08350</name>
</gene>
<evidence type="ECO:0000255" key="1">
    <source>
        <dbReference type="HAMAP-Rule" id="MF_02004"/>
    </source>
</evidence>